<gene>
    <name evidence="1" type="primary">fabZ</name>
    <name type="ordered locus">CLM_4089</name>
</gene>
<organism>
    <name type="scientific">Clostridium botulinum (strain Kyoto / Type A2)</name>
    <dbReference type="NCBI Taxonomy" id="536232"/>
    <lineage>
        <taxon>Bacteria</taxon>
        <taxon>Bacillati</taxon>
        <taxon>Bacillota</taxon>
        <taxon>Clostridia</taxon>
        <taxon>Eubacteriales</taxon>
        <taxon>Clostridiaceae</taxon>
        <taxon>Clostridium</taxon>
    </lineage>
</organism>
<reference key="1">
    <citation type="submission" date="2008-10" db="EMBL/GenBank/DDBJ databases">
        <title>Genome sequence of Clostridium botulinum A2 Kyoto.</title>
        <authorList>
            <person name="Shrivastava S."/>
            <person name="Brinkac L.M."/>
            <person name="Brown J.L."/>
            <person name="Bruce D."/>
            <person name="Detter C.C."/>
            <person name="Johnson E.A."/>
            <person name="Munk C.A."/>
            <person name="Smith L.A."/>
            <person name="Smith T.J."/>
            <person name="Sutton G."/>
            <person name="Brettin T.S."/>
        </authorList>
    </citation>
    <scope>NUCLEOTIDE SEQUENCE [LARGE SCALE GENOMIC DNA]</scope>
    <source>
        <strain>Kyoto / Type A2</strain>
    </source>
</reference>
<feature type="chain" id="PRO_1000134696" description="3-hydroxyacyl-[acyl-carrier-protein] dehydratase FabZ">
    <location>
        <begin position="1"/>
        <end position="144"/>
    </location>
</feature>
<feature type="active site" evidence="1">
    <location>
        <position position="51"/>
    </location>
</feature>
<accession>C1FNK0</accession>
<proteinExistence type="inferred from homology"/>
<dbReference type="EC" id="4.2.1.59" evidence="1"/>
<dbReference type="EMBL" id="CP001581">
    <property type="protein sequence ID" value="ACO87097.1"/>
    <property type="molecule type" value="Genomic_DNA"/>
</dbReference>
<dbReference type="RefSeq" id="WP_003359347.1">
    <property type="nucleotide sequence ID" value="NC_012563.1"/>
</dbReference>
<dbReference type="SMR" id="C1FNK0"/>
<dbReference type="KEGG" id="cby:CLM_4089"/>
<dbReference type="eggNOG" id="COG0764">
    <property type="taxonomic scope" value="Bacteria"/>
</dbReference>
<dbReference type="HOGENOM" id="CLU_078912_3_0_9"/>
<dbReference type="Proteomes" id="UP000001374">
    <property type="component" value="Chromosome"/>
</dbReference>
<dbReference type="GO" id="GO:0005737">
    <property type="term" value="C:cytoplasm"/>
    <property type="evidence" value="ECO:0007669"/>
    <property type="project" value="UniProtKB-SubCell"/>
</dbReference>
<dbReference type="GO" id="GO:0016020">
    <property type="term" value="C:membrane"/>
    <property type="evidence" value="ECO:0007669"/>
    <property type="project" value="GOC"/>
</dbReference>
<dbReference type="GO" id="GO:0019171">
    <property type="term" value="F:(3R)-hydroxyacyl-[acyl-carrier-protein] dehydratase activity"/>
    <property type="evidence" value="ECO:0007669"/>
    <property type="project" value="UniProtKB-EC"/>
</dbReference>
<dbReference type="GO" id="GO:0006633">
    <property type="term" value="P:fatty acid biosynthetic process"/>
    <property type="evidence" value="ECO:0007669"/>
    <property type="project" value="UniProtKB-UniRule"/>
</dbReference>
<dbReference type="GO" id="GO:0009245">
    <property type="term" value="P:lipid A biosynthetic process"/>
    <property type="evidence" value="ECO:0007669"/>
    <property type="project" value="UniProtKB-UniRule"/>
</dbReference>
<dbReference type="CDD" id="cd01288">
    <property type="entry name" value="FabZ"/>
    <property type="match status" value="1"/>
</dbReference>
<dbReference type="FunFam" id="3.10.129.10:FF:000001">
    <property type="entry name" value="3-hydroxyacyl-[acyl-carrier-protein] dehydratase FabZ"/>
    <property type="match status" value="1"/>
</dbReference>
<dbReference type="Gene3D" id="3.10.129.10">
    <property type="entry name" value="Hotdog Thioesterase"/>
    <property type="match status" value="1"/>
</dbReference>
<dbReference type="HAMAP" id="MF_00406">
    <property type="entry name" value="FabZ"/>
    <property type="match status" value="1"/>
</dbReference>
<dbReference type="InterPro" id="IPR013114">
    <property type="entry name" value="FabA_FabZ"/>
</dbReference>
<dbReference type="InterPro" id="IPR010084">
    <property type="entry name" value="FabZ"/>
</dbReference>
<dbReference type="InterPro" id="IPR029069">
    <property type="entry name" value="HotDog_dom_sf"/>
</dbReference>
<dbReference type="NCBIfam" id="TIGR01750">
    <property type="entry name" value="fabZ"/>
    <property type="match status" value="1"/>
</dbReference>
<dbReference type="NCBIfam" id="NF000582">
    <property type="entry name" value="PRK00006.1"/>
    <property type="match status" value="1"/>
</dbReference>
<dbReference type="PANTHER" id="PTHR30272">
    <property type="entry name" value="3-HYDROXYACYL-[ACYL-CARRIER-PROTEIN] DEHYDRATASE"/>
    <property type="match status" value="1"/>
</dbReference>
<dbReference type="PANTHER" id="PTHR30272:SF1">
    <property type="entry name" value="3-HYDROXYACYL-[ACYL-CARRIER-PROTEIN] DEHYDRATASE"/>
    <property type="match status" value="1"/>
</dbReference>
<dbReference type="Pfam" id="PF07977">
    <property type="entry name" value="FabA"/>
    <property type="match status" value="1"/>
</dbReference>
<dbReference type="SUPFAM" id="SSF54637">
    <property type="entry name" value="Thioesterase/thiol ester dehydrase-isomerase"/>
    <property type="match status" value="1"/>
</dbReference>
<sequence>MEKFLDINEIKKIIPHRYPFLLVDKITELEEGKSAVGYKNVTANEYFFNGHFPEEPVMPGVLIIEALAQVGAVAILSKEEFKGKIAYFGGINKAKFRKKVVPGDVLRLSIELTKIKGVAGVGKAVATVDGKVAAEAELLFVIGK</sequence>
<name>FABZ_CLOBJ</name>
<protein>
    <recommendedName>
        <fullName evidence="1">3-hydroxyacyl-[acyl-carrier-protein] dehydratase FabZ</fullName>
        <ecNumber evidence="1">4.2.1.59</ecNumber>
    </recommendedName>
    <alternativeName>
        <fullName evidence="1">(3R)-hydroxymyristoyl-[acyl-carrier-protein] dehydratase</fullName>
        <shortName evidence="1">(3R)-hydroxymyristoyl-ACP dehydrase</shortName>
    </alternativeName>
    <alternativeName>
        <fullName evidence="1">Beta-hydroxyacyl-ACP dehydratase</fullName>
    </alternativeName>
</protein>
<keyword id="KW-0963">Cytoplasm</keyword>
<keyword id="KW-0441">Lipid A biosynthesis</keyword>
<keyword id="KW-0444">Lipid biosynthesis</keyword>
<keyword id="KW-0443">Lipid metabolism</keyword>
<keyword id="KW-0456">Lyase</keyword>
<comment type="function">
    <text evidence="1">Involved in unsaturated fatty acids biosynthesis. Catalyzes the dehydration of short chain beta-hydroxyacyl-ACPs and long chain saturated and unsaturated beta-hydroxyacyl-ACPs.</text>
</comment>
<comment type="catalytic activity">
    <reaction evidence="1">
        <text>a (3R)-hydroxyacyl-[ACP] = a (2E)-enoyl-[ACP] + H2O</text>
        <dbReference type="Rhea" id="RHEA:13097"/>
        <dbReference type="Rhea" id="RHEA-COMP:9925"/>
        <dbReference type="Rhea" id="RHEA-COMP:9945"/>
        <dbReference type="ChEBI" id="CHEBI:15377"/>
        <dbReference type="ChEBI" id="CHEBI:78784"/>
        <dbReference type="ChEBI" id="CHEBI:78827"/>
        <dbReference type="EC" id="4.2.1.59"/>
    </reaction>
</comment>
<comment type="subcellular location">
    <subcellularLocation>
        <location evidence="1">Cytoplasm</location>
    </subcellularLocation>
</comment>
<comment type="similarity">
    <text evidence="1">Belongs to the thioester dehydratase family. FabZ subfamily.</text>
</comment>
<evidence type="ECO:0000255" key="1">
    <source>
        <dbReference type="HAMAP-Rule" id="MF_00406"/>
    </source>
</evidence>